<name>HCAD_ECOLU</name>
<protein>
    <recommendedName>
        <fullName evidence="1">3-phenylpropionate/cinnamic acid dioxygenase ferredoxin--NAD(+) reductase component</fullName>
        <ecNumber evidence="1">1.18.1.3</ecNumber>
    </recommendedName>
</protein>
<proteinExistence type="inferred from homology"/>
<evidence type="ECO:0000255" key="1">
    <source>
        <dbReference type="HAMAP-Rule" id="MF_01651"/>
    </source>
</evidence>
<reference key="1">
    <citation type="journal article" date="2009" name="PLoS Genet.">
        <title>Organised genome dynamics in the Escherichia coli species results in highly diverse adaptive paths.</title>
        <authorList>
            <person name="Touchon M."/>
            <person name="Hoede C."/>
            <person name="Tenaillon O."/>
            <person name="Barbe V."/>
            <person name="Baeriswyl S."/>
            <person name="Bidet P."/>
            <person name="Bingen E."/>
            <person name="Bonacorsi S."/>
            <person name="Bouchier C."/>
            <person name="Bouvet O."/>
            <person name="Calteau A."/>
            <person name="Chiapello H."/>
            <person name="Clermont O."/>
            <person name="Cruveiller S."/>
            <person name="Danchin A."/>
            <person name="Diard M."/>
            <person name="Dossat C."/>
            <person name="Karoui M.E."/>
            <person name="Frapy E."/>
            <person name="Garry L."/>
            <person name="Ghigo J.M."/>
            <person name="Gilles A.M."/>
            <person name="Johnson J."/>
            <person name="Le Bouguenec C."/>
            <person name="Lescat M."/>
            <person name="Mangenot S."/>
            <person name="Martinez-Jehanne V."/>
            <person name="Matic I."/>
            <person name="Nassif X."/>
            <person name="Oztas S."/>
            <person name="Petit M.A."/>
            <person name="Pichon C."/>
            <person name="Rouy Z."/>
            <person name="Ruf C.S."/>
            <person name="Schneider D."/>
            <person name="Tourret J."/>
            <person name="Vacherie B."/>
            <person name="Vallenet D."/>
            <person name="Medigue C."/>
            <person name="Rocha E.P.C."/>
            <person name="Denamur E."/>
        </authorList>
    </citation>
    <scope>NUCLEOTIDE SEQUENCE [LARGE SCALE GENOMIC DNA]</scope>
    <source>
        <strain>UMN026 / ExPEC</strain>
    </source>
</reference>
<organism>
    <name type="scientific">Escherichia coli O17:K52:H18 (strain UMN026 / ExPEC)</name>
    <dbReference type="NCBI Taxonomy" id="585056"/>
    <lineage>
        <taxon>Bacteria</taxon>
        <taxon>Pseudomonadati</taxon>
        <taxon>Pseudomonadota</taxon>
        <taxon>Gammaproteobacteria</taxon>
        <taxon>Enterobacterales</taxon>
        <taxon>Enterobacteriaceae</taxon>
        <taxon>Escherichia</taxon>
    </lineage>
</organism>
<feature type="chain" id="PRO_1000186986" description="3-phenylpropionate/cinnamic acid dioxygenase ferredoxin--NAD(+) reductase component">
    <location>
        <begin position="1"/>
        <end position="400"/>
    </location>
</feature>
<feature type="binding site" evidence="1">
    <location>
        <begin position="5"/>
        <end position="36"/>
    </location>
    <ligand>
        <name>FAD</name>
        <dbReference type="ChEBI" id="CHEBI:57692"/>
    </ligand>
</feature>
<feature type="binding site" evidence="1">
    <location>
        <begin position="146"/>
        <end position="174"/>
    </location>
    <ligand>
        <name>NAD(+)</name>
        <dbReference type="ChEBI" id="CHEBI:57540"/>
    </ligand>
</feature>
<keyword id="KW-0058">Aromatic hydrocarbons catabolism</keyword>
<keyword id="KW-0274">FAD</keyword>
<keyword id="KW-0285">Flavoprotein</keyword>
<keyword id="KW-0520">NAD</keyword>
<keyword id="KW-0560">Oxidoreductase</keyword>
<accession>B7N6C9</accession>
<sequence length="400" mass="43916">MKEKTIIIVGGGQAAAMAAASLRQQGFTGELHLFSDERHLPYERPPLSKSMLLEDSPQLQQVLPANWWQENNVHLHSGVTIKSLGRDTRELVLTNGESWQWDQLFMATGAAARPLPLLDALGERCFTLRHADDAARLREVLQPERSVVIVGAGTIGLELAASATQRGCKVTVIELAATVMGRNAPPPVQRYLLQRHQQAGVRILLNNAIEHVVDGEKVELTLQSGETLQADVVIYGIGISANDQLAREANLDTANGIVIDEACRTCDPAIFAGGDVAITRLDNGALHRCESWENANNQAQIAAAAMLGLPLPRLPPPWFWSDQYSDNLQFIGDMHGDDWICRGNPETQKAIWFNLQNGVLIGAVTLNQGREIRPIRKWIQSGKTFNAKLLTDEDIALKSL</sequence>
<dbReference type="EC" id="1.18.1.3" evidence="1"/>
<dbReference type="EMBL" id="CU928163">
    <property type="protein sequence ID" value="CAR14038.1"/>
    <property type="molecule type" value="Genomic_DNA"/>
</dbReference>
<dbReference type="RefSeq" id="WP_000660778.1">
    <property type="nucleotide sequence ID" value="NC_011751.1"/>
</dbReference>
<dbReference type="RefSeq" id="YP_002413564.1">
    <property type="nucleotide sequence ID" value="NC_011751.1"/>
</dbReference>
<dbReference type="SMR" id="B7N6C9"/>
<dbReference type="STRING" id="585056.ECUMN_2862"/>
<dbReference type="KEGG" id="eum:ECUMN_2862"/>
<dbReference type="PATRIC" id="fig|585056.7.peg.3049"/>
<dbReference type="HOGENOM" id="CLU_003291_4_0_6"/>
<dbReference type="UniPathway" id="UPA00714"/>
<dbReference type="Proteomes" id="UP000007097">
    <property type="component" value="Chromosome"/>
</dbReference>
<dbReference type="GO" id="GO:0005737">
    <property type="term" value="C:cytoplasm"/>
    <property type="evidence" value="ECO:0007669"/>
    <property type="project" value="TreeGrafter"/>
</dbReference>
<dbReference type="GO" id="GO:0008695">
    <property type="term" value="F:3-phenylpropionate dioxygenase activity"/>
    <property type="evidence" value="ECO:0007669"/>
    <property type="project" value="UniProtKB-UniRule"/>
</dbReference>
<dbReference type="GO" id="GO:0008860">
    <property type="term" value="F:ferredoxin-NAD+ reductase activity"/>
    <property type="evidence" value="ECO:0007669"/>
    <property type="project" value="UniProtKB-EC"/>
</dbReference>
<dbReference type="GO" id="GO:0016651">
    <property type="term" value="F:oxidoreductase activity, acting on NAD(P)H"/>
    <property type="evidence" value="ECO:0007669"/>
    <property type="project" value="TreeGrafter"/>
</dbReference>
<dbReference type="GO" id="GO:0019380">
    <property type="term" value="P:3-phenylpropionate catabolic process"/>
    <property type="evidence" value="ECO:0007669"/>
    <property type="project" value="UniProtKB-UniRule"/>
</dbReference>
<dbReference type="FunFam" id="3.30.390.30:FF:000010">
    <property type="entry name" value="3-phenylpropionate/cinnamic acid dioxygenase ferredoxin--NAD(+) reductase component"/>
    <property type="match status" value="1"/>
</dbReference>
<dbReference type="FunFam" id="3.50.50.60:FF:000088">
    <property type="entry name" value="3-phenylpropionate/cinnamic acid dioxygenase ferredoxin--NAD(+) reductase component"/>
    <property type="match status" value="1"/>
</dbReference>
<dbReference type="Gene3D" id="3.30.390.30">
    <property type="match status" value="1"/>
</dbReference>
<dbReference type="Gene3D" id="3.50.50.60">
    <property type="entry name" value="FAD/NAD(P)-binding domain"/>
    <property type="match status" value="2"/>
</dbReference>
<dbReference type="HAMAP" id="MF_01651">
    <property type="entry name" value="HcaD"/>
    <property type="match status" value="1"/>
</dbReference>
<dbReference type="InterPro" id="IPR050446">
    <property type="entry name" value="FAD-oxidoreductase/Apoptosis"/>
</dbReference>
<dbReference type="InterPro" id="IPR036188">
    <property type="entry name" value="FAD/NAD-bd_sf"/>
</dbReference>
<dbReference type="InterPro" id="IPR023753">
    <property type="entry name" value="FAD/NAD-binding_dom"/>
</dbReference>
<dbReference type="InterPro" id="IPR016156">
    <property type="entry name" value="FAD/NAD-linked_Rdtase_dimer_sf"/>
</dbReference>
<dbReference type="InterPro" id="IPR023744">
    <property type="entry name" value="HcaD"/>
</dbReference>
<dbReference type="InterPro" id="IPR028202">
    <property type="entry name" value="Reductase_C"/>
</dbReference>
<dbReference type="InterPro" id="IPR053382">
    <property type="entry name" value="Ring-hydroxylating_dioxygenase"/>
</dbReference>
<dbReference type="NCBIfam" id="NF042949">
    <property type="entry name" value="3PPDioc_HcaD"/>
    <property type="match status" value="1"/>
</dbReference>
<dbReference type="NCBIfam" id="NF007286">
    <property type="entry name" value="PRK09754.1"/>
    <property type="match status" value="1"/>
</dbReference>
<dbReference type="PANTHER" id="PTHR43557">
    <property type="entry name" value="APOPTOSIS-INDUCING FACTOR 1"/>
    <property type="match status" value="1"/>
</dbReference>
<dbReference type="PANTHER" id="PTHR43557:SF2">
    <property type="entry name" value="RIESKE DOMAIN-CONTAINING PROTEIN-RELATED"/>
    <property type="match status" value="1"/>
</dbReference>
<dbReference type="Pfam" id="PF07992">
    <property type="entry name" value="Pyr_redox_2"/>
    <property type="match status" value="1"/>
</dbReference>
<dbReference type="Pfam" id="PF14759">
    <property type="entry name" value="Reductase_C"/>
    <property type="match status" value="1"/>
</dbReference>
<dbReference type="PRINTS" id="PR00368">
    <property type="entry name" value="FADPNR"/>
</dbReference>
<dbReference type="PRINTS" id="PR00411">
    <property type="entry name" value="PNDRDTASEI"/>
</dbReference>
<dbReference type="SUPFAM" id="SSF51905">
    <property type="entry name" value="FAD/NAD(P)-binding domain"/>
    <property type="match status" value="1"/>
</dbReference>
<dbReference type="SUPFAM" id="SSF55424">
    <property type="entry name" value="FAD/NAD-linked reductases, dimerisation (C-terminal) domain"/>
    <property type="match status" value="1"/>
</dbReference>
<gene>
    <name evidence="1" type="primary">hcaD</name>
    <name type="ordered locus">ECUMN_2862</name>
</gene>
<comment type="function">
    <text evidence="1">Part of the multicomponent 3-phenylpropionate dioxygenase, that converts 3-phenylpropionic acid (PP) and cinnamic acid (CI) into 3-phenylpropionate-dihydrodiol (PP-dihydrodiol) and cinnamic acid-dihydrodiol (CI-dihydrodiol), respectively.</text>
</comment>
<comment type="catalytic activity">
    <reaction evidence="1">
        <text>2 reduced [2Fe-2S]-[ferredoxin] + NAD(+) + H(+) = 2 oxidized [2Fe-2S]-[ferredoxin] + NADH</text>
        <dbReference type="Rhea" id="RHEA:16521"/>
        <dbReference type="Rhea" id="RHEA-COMP:10000"/>
        <dbReference type="Rhea" id="RHEA-COMP:10001"/>
        <dbReference type="ChEBI" id="CHEBI:15378"/>
        <dbReference type="ChEBI" id="CHEBI:33737"/>
        <dbReference type="ChEBI" id="CHEBI:33738"/>
        <dbReference type="ChEBI" id="CHEBI:57540"/>
        <dbReference type="ChEBI" id="CHEBI:57945"/>
        <dbReference type="EC" id="1.18.1.3"/>
    </reaction>
</comment>
<comment type="cofactor">
    <cofactor evidence="1">
        <name>FAD</name>
        <dbReference type="ChEBI" id="CHEBI:57692"/>
    </cofactor>
</comment>
<comment type="pathway">
    <text evidence="1">Aromatic compound metabolism; 3-phenylpropanoate degradation.</text>
</comment>
<comment type="subunit">
    <text evidence="1">This dioxygenase system consists of four proteins: the two subunits of the hydroxylase component (HcaE and HcaF), a ferredoxin (HcaC) and a ferredoxin reductase (HcaD).</text>
</comment>
<comment type="similarity">
    <text evidence="1">Belongs to the bacterial ring-hydroxylating dioxygenase ferredoxin reductase family.</text>
</comment>